<protein>
    <recommendedName>
        <fullName evidence="1">3-demethoxyubiquinol 3-hydroxylase</fullName>
        <shortName evidence="1">DMQ hydroxylase</shortName>
        <ecNumber evidence="1">1.14.99.60</ecNumber>
    </recommendedName>
    <alternativeName>
        <fullName evidence="1">2-nonaprenyl-3-methyl-6-methoxy-1,4-benzoquinol hydroxylase</fullName>
    </alternativeName>
</protein>
<reference key="1">
    <citation type="journal article" date="2005" name="Nat. Biotechnol.">
        <title>Complete genome sequence of the plant commensal Pseudomonas fluorescens Pf-5.</title>
        <authorList>
            <person name="Paulsen I.T."/>
            <person name="Press C.M."/>
            <person name="Ravel J."/>
            <person name="Kobayashi D.Y."/>
            <person name="Myers G.S.A."/>
            <person name="Mavrodi D.V."/>
            <person name="DeBoy R.T."/>
            <person name="Seshadri R."/>
            <person name="Ren Q."/>
            <person name="Madupu R."/>
            <person name="Dodson R.J."/>
            <person name="Durkin A.S."/>
            <person name="Brinkac L.M."/>
            <person name="Daugherty S.C."/>
            <person name="Sullivan S.A."/>
            <person name="Rosovitz M.J."/>
            <person name="Gwinn M.L."/>
            <person name="Zhou L."/>
            <person name="Schneider D.J."/>
            <person name="Cartinhour S.W."/>
            <person name="Nelson W.C."/>
            <person name="Weidman J."/>
            <person name="Watkins K."/>
            <person name="Tran K."/>
            <person name="Khouri H."/>
            <person name="Pierson E.A."/>
            <person name="Pierson L.S. III"/>
            <person name="Thomashow L.S."/>
            <person name="Loper J.E."/>
        </authorList>
    </citation>
    <scope>NUCLEOTIDE SEQUENCE [LARGE SCALE GENOMIC DNA]</scope>
    <source>
        <strain>ATCC BAA-477 / NRRL B-23932 / Pf-5</strain>
    </source>
</reference>
<comment type="function">
    <text evidence="1">Catalyzes the hydroxylation of 2-nonaprenyl-3-methyl-6-methoxy-1,4-benzoquinol during ubiquinone biosynthesis.</text>
</comment>
<comment type="catalytic activity">
    <reaction evidence="1">
        <text>a 5-methoxy-2-methyl-3-(all-trans-polyprenyl)benzene-1,4-diol + AH2 + O2 = a 3-demethylubiquinol + A + H2O</text>
        <dbReference type="Rhea" id="RHEA:50908"/>
        <dbReference type="Rhea" id="RHEA-COMP:10859"/>
        <dbReference type="Rhea" id="RHEA-COMP:10914"/>
        <dbReference type="ChEBI" id="CHEBI:13193"/>
        <dbReference type="ChEBI" id="CHEBI:15377"/>
        <dbReference type="ChEBI" id="CHEBI:15379"/>
        <dbReference type="ChEBI" id="CHEBI:17499"/>
        <dbReference type="ChEBI" id="CHEBI:84167"/>
        <dbReference type="ChEBI" id="CHEBI:84422"/>
        <dbReference type="EC" id="1.14.99.60"/>
    </reaction>
</comment>
<comment type="cofactor">
    <cofactor evidence="1">
        <name>Fe cation</name>
        <dbReference type="ChEBI" id="CHEBI:24875"/>
    </cofactor>
    <text evidence="1">Binds 2 iron ions per subunit.</text>
</comment>
<comment type="pathway">
    <text evidence="1">Cofactor biosynthesis; ubiquinone biosynthesis.</text>
</comment>
<comment type="subcellular location">
    <subcellularLocation>
        <location evidence="1">Cell membrane</location>
        <topology evidence="1">Peripheral membrane protein</topology>
    </subcellularLocation>
</comment>
<comment type="similarity">
    <text evidence="1">Belongs to the COQ7 family.</text>
</comment>
<proteinExistence type="inferred from homology"/>
<organism>
    <name type="scientific">Pseudomonas fluorescens (strain ATCC BAA-477 / NRRL B-23932 / Pf-5)</name>
    <dbReference type="NCBI Taxonomy" id="220664"/>
    <lineage>
        <taxon>Bacteria</taxon>
        <taxon>Pseudomonadati</taxon>
        <taxon>Pseudomonadota</taxon>
        <taxon>Gammaproteobacteria</taxon>
        <taxon>Pseudomonadales</taxon>
        <taxon>Pseudomonadaceae</taxon>
        <taxon>Pseudomonas</taxon>
    </lineage>
</organism>
<accession>Q4K507</accession>
<gene>
    <name evidence="1" type="primary">coq7</name>
    <name type="ordered locus">PFL_5617</name>
</gene>
<dbReference type="EC" id="1.14.99.60" evidence="1"/>
<dbReference type="EMBL" id="CP000076">
    <property type="protein sequence ID" value="AAY94810.1"/>
    <property type="molecule type" value="Genomic_DNA"/>
</dbReference>
<dbReference type="RefSeq" id="WP_011063796.1">
    <property type="nucleotide sequence ID" value="NC_004129.6"/>
</dbReference>
<dbReference type="SMR" id="Q4K507"/>
<dbReference type="STRING" id="220664.PFL_5617"/>
<dbReference type="GeneID" id="57478567"/>
<dbReference type="KEGG" id="pfl:PFL_5617"/>
<dbReference type="eggNOG" id="COG2941">
    <property type="taxonomic scope" value="Bacteria"/>
</dbReference>
<dbReference type="HOGENOM" id="CLU_088601_0_0_6"/>
<dbReference type="UniPathway" id="UPA00232"/>
<dbReference type="Proteomes" id="UP000008540">
    <property type="component" value="Chromosome"/>
</dbReference>
<dbReference type="GO" id="GO:0005886">
    <property type="term" value="C:plasma membrane"/>
    <property type="evidence" value="ECO:0007669"/>
    <property type="project" value="UniProtKB-SubCell"/>
</dbReference>
<dbReference type="GO" id="GO:0008682">
    <property type="term" value="F:3-demethoxyubiquinol 3-hydroxylase activity"/>
    <property type="evidence" value="ECO:0007669"/>
    <property type="project" value="UniProtKB-EC"/>
</dbReference>
<dbReference type="GO" id="GO:0046872">
    <property type="term" value="F:metal ion binding"/>
    <property type="evidence" value="ECO:0007669"/>
    <property type="project" value="UniProtKB-KW"/>
</dbReference>
<dbReference type="GO" id="GO:0006744">
    <property type="term" value="P:ubiquinone biosynthetic process"/>
    <property type="evidence" value="ECO:0007669"/>
    <property type="project" value="UniProtKB-UniRule"/>
</dbReference>
<dbReference type="CDD" id="cd01042">
    <property type="entry name" value="DMQH"/>
    <property type="match status" value="1"/>
</dbReference>
<dbReference type="FunFam" id="1.20.1260.10:FF:000013">
    <property type="entry name" value="2-nonaprenyl-3-methyl-6-methoxy-1,4-benzoquinol hydroxylase"/>
    <property type="match status" value="1"/>
</dbReference>
<dbReference type="Gene3D" id="1.20.1260.10">
    <property type="match status" value="1"/>
</dbReference>
<dbReference type="HAMAP" id="MF_01658">
    <property type="entry name" value="COQ7"/>
    <property type="match status" value="1"/>
</dbReference>
<dbReference type="InterPro" id="IPR047809">
    <property type="entry name" value="COQ7_proteobact"/>
</dbReference>
<dbReference type="InterPro" id="IPR012347">
    <property type="entry name" value="Ferritin-like"/>
</dbReference>
<dbReference type="InterPro" id="IPR009078">
    <property type="entry name" value="Ferritin-like_SF"/>
</dbReference>
<dbReference type="InterPro" id="IPR011566">
    <property type="entry name" value="Ubq_synth_Coq7"/>
</dbReference>
<dbReference type="NCBIfam" id="NF033656">
    <property type="entry name" value="DMQ_monoox_COQ7"/>
    <property type="match status" value="1"/>
</dbReference>
<dbReference type="PANTHER" id="PTHR11237:SF4">
    <property type="entry name" value="5-DEMETHOXYUBIQUINONE HYDROXYLASE, MITOCHONDRIAL"/>
    <property type="match status" value="1"/>
</dbReference>
<dbReference type="PANTHER" id="PTHR11237">
    <property type="entry name" value="COENZYME Q10 BIOSYNTHESIS PROTEIN 7"/>
    <property type="match status" value="1"/>
</dbReference>
<dbReference type="Pfam" id="PF03232">
    <property type="entry name" value="COQ7"/>
    <property type="match status" value="1"/>
</dbReference>
<dbReference type="SUPFAM" id="SSF47240">
    <property type="entry name" value="Ferritin-like"/>
    <property type="match status" value="1"/>
</dbReference>
<name>COQ7_PSEF5</name>
<sequence>MTTQRHYSPIDRLLLQADMAMRTLLPFSGQPYRPSPAIVQPEAQMSDEDTRHVAGLMRINHTGEVCAQALYQGQALTAKLPQVRQAMEHAAEEEIDHLAWCEQRIRQLGSHPSVLNPLFYGLSFGIGAAAGLISDKVSLGFVAATEDQVCKHLNEHLEQLPAEDEKSRAILEQMRIDEEHHAETALEAGGFRFPAPVKFGMSLLAKVMTKSTYRI</sequence>
<evidence type="ECO:0000255" key="1">
    <source>
        <dbReference type="HAMAP-Rule" id="MF_01658"/>
    </source>
</evidence>
<feature type="chain" id="PRO_0000338711" description="3-demethoxyubiquinol 3-hydroxylase">
    <location>
        <begin position="1"/>
        <end position="215"/>
    </location>
</feature>
<feature type="binding site" evidence="1">
    <location>
        <position position="64"/>
    </location>
    <ligand>
        <name>Fe cation</name>
        <dbReference type="ChEBI" id="CHEBI:24875"/>
        <label>1</label>
    </ligand>
</feature>
<feature type="binding site" evidence="1">
    <location>
        <position position="94"/>
    </location>
    <ligand>
        <name>Fe cation</name>
        <dbReference type="ChEBI" id="CHEBI:24875"/>
        <label>1</label>
    </ligand>
</feature>
<feature type="binding site" evidence="1">
    <location>
        <position position="94"/>
    </location>
    <ligand>
        <name>Fe cation</name>
        <dbReference type="ChEBI" id="CHEBI:24875"/>
        <label>2</label>
    </ligand>
</feature>
<feature type="binding site" evidence="1">
    <location>
        <position position="97"/>
    </location>
    <ligand>
        <name>Fe cation</name>
        <dbReference type="ChEBI" id="CHEBI:24875"/>
        <label>1</label>
    </ligand>
</feature>
<feature type="binding site" evidence="1">
    <location>
        <position position="146"/>
    </location>
    <ligand>
        <name>Fe cation</name>
        <dbReference type="ChEBI" id="CHEBI:24875"/>
        <label>2</label>
    </ligand>
</feature>
<feature type="binding site" evidence="1">
    <location>
        <position position="178"/>
    </location>
    <ligand>
        <name>Fe cation</name>
        <dbReference type="ChEBI" id="CHEBI:24875"/>
        <label>1</label>
    </ligand>
</feature>
<feature type="binding site" evidence="1">
    <location>
        <position position="178"/>
    </location>
    <ligand>
        <name>Fe cation</name>
        <dbReference type="ChEBI" id="CHEBI:24875"/>
        <label>2</label>
    </ligand>
</feature>
<feature type="binding site" evidence="1">
    <location>
        <position position="181"/>
    </location>
    <ligand>
        <name>Fe cation</name>
        <dbReference type="ChEBI" id="CHEBI:24875"/>
        <label>2</label>
    </ligand>
</feature>
<keyword id="KW-1003">Cell membrane</keyword>
<keyword id="KW-0408">Iron</keyword>
<keyword id="KW-0472">Membrane</keyword>
<keyword id="KW-0479">Metal-binding</keyword>
<keyword id="KW-0503">Monooxygenase</keyword>
<keyword id="KW-0560">Oxidoreductase</keyword>
<keyword id="KW-0831">Ubiquinone biosynthesis</keyword>